<sequence length="172" mass="19753">MGRRKIKMEMVQDMNTRQVTFSKRRTGLFKKASELATLCNAELGIVVFSPGGKPFSYGKPNLDSVAERFMREYDDSDSGDEEKSGNYRPKLKRLSERLDLLNQEVEAEKERGEKSQEKLESAGDERFKESIETLTLDELNEYKDRLQTVHGRIEGQVNHLQASSCLMLLSRK</sequence>
<evidence type="ECO:0000255" key="1"/>
<evidence type="ECO:0000255" key="2">
    <source>
        <dbReference type="PROSITE-ProRule" id="PRU00251"/>
    </source>
</evidence>
<evidence type="ECO:0000256" key="3">
    <source>
        <dbReference type="SAM" id="MobiDB-lite"/>
    </source>
</evidence>
<evidence type="ECO:0000269" key="4">
    <source>
    </source>
</evidence>
<evidence type="ECO:0000269" key="5">
    <source>
    </source>
</evidence>
<evidence type="ECO:0000303" key="6">
    <source>
    </source>
</evidence>
<evidence type="ECO:0000305" key="7"/>
<evidence type="ECO:0000312" key="8">
    <source>
        <dbReference type="Araport" id="AT2G34440"/>
    </source>
</evidence>
<reference key="1">
    <citation type="journal article" date="1999" name="Nature">
        <title>Sequence and analysis of chromosome 2 of the plant Arabidopsis thaliana.</title>
        <authorList>
            <person name="Lin X."/>
            <person name="Kaul S."/>
            <person name="Rounsley S.D."/>
            <person name="Shea T.P."/>
            <person name="Benito M.-I."/>
            <person name="Town C.D."/>
            <person name="Fujii C.Y."/>
            <person name="Mason T.M."/>
            <person name="Bowman C.L."/>
            <person name="Barnstead M.E."/>
            <person name="Feldblyum T.V."/>
            <person name="Buell C.R."/>
            <person name="Ketchum K.A."/>
            <person name="Lee J.J."/>
            <person name="Ronning C.M."/>
            <person name="Koo H.L."/>
            <person name="Moffat K.S."/>
            <person name="Cronin L.A."/>
            <person name="Shen M."/>
            <person name="Pai G."/>
            <person name="Van Aken S."/>
            <person name="Umayam L."/>
            <person name="Tallon L.J."/>
            <person name="Gill J.E."/>
            <person name="Adams M.D."/>
            <person name="Carrera A.J."/>
            <person name="Creasy T.H."/>
            <person name="Goodman H.M."/>
            <person name="Somerville C.R."/>
            <person name="Copenhaver G.P."/>
            <person name="Preuss D."/>
            <person name="Nierman W.C."/>
            <person name="White O."/>
            <person name="Eisen J.A."/>
            <person name="Salzberg S.L."/>
            <person name="Fraser C.M."/>
            <person name="Venter J.C."/>
        </authorList>
    </citation>
    <scope>NUCLEOTIDE SEQUENCE [LARGE SCALE GENOMIC DNA]</scope>
    <source>
        <strain>cv. Columbia</strain>
    </source>
</reference>
<reference key="2">
    <citation type="journal article" date="2017" name="Plant J.">
        <title>Araport11: a complete reannotation of the Arabidopsis thaliana reference genome.</title>
        <authorList>
            <person name="Cheng C.Y."/>
            <person name="Krishnakumar V."/>
            <person name="Chan A.P."/>
            <person name="Thibaud-Nissen F."/>
            <person name="Schobel S."/>
            <person name="Town C.D."/>
        </authorList>
    </citation>
    <scope>GENOME REANNOTATION</scope>
    <source>
        <strain>cv. Columbia</strain>
    </source>
</reference>
<reference key="3">
    <citation type="journal article" date="2006" name="Plant Biotechnol. J.">
        <title>Simultaneous high-throughput recombinational cloning of open reading frames in closed and open configurations.</title>
        <authorList>
            <person name="Underwood B.A."/>
            <person name="Vanderhaeghen R."/>
            <person name="Whitford R."/>
            <person name="Town C.D."/>
            <person name="Hilson P."/>
        </authorList>
    </citation>
    <scope>NUCLEOTIDE SEQUENCE [LARGE SCALE MRNA]</scope>
    <source>
        <strain>cv. Columbia</strain>
    </source>
</reference>
<reference key="4">
    <citation type="journal article" date="2003" name="Mol. Biol. Evol.">
        <title>Evolution and divergence of the MADS-box gene family based on genome-wide expression analyses.</title>
        <authorList>
            <person name="Kofuji R."/>
            <person name="Sumikawa N."/>
            <person name="Yamasaki M."/>
            <person name="Kondo K."/>
            <person name="Ueda K."/>
            <person name="Ito M."/>
            <person name="Hasebe M."/>
        </authorList>
    </citation>
    <scope>NUCLEOTIDE SEQUENCE [MRNA] OF 32-172</scope>
    <scope>TISSUE SPECIFICITY</scope>
    <source>
        <strain>cv. Columbia</strain>
    </source>
</reference>
<reference key="5">
    <citation type="journal article" date="2003" name="Plant Cell">
        <title>Molecular and phylogenetic analyses of the complete MADS-box transcription factor family in Arabidopsis: new openings to the MADS world.</title>
        <authorList>
            <person name="Parenicova L."/>
            <person name="de Folter S."/>
            <person name="Kieffer M."/>
            <person name="Horner D.S."/>
            <person name="Favalli C."/>
            <person name="Busscher J."/>
            <person name="Cook H.E."/>
            <person name="Ingram R.M."/>
            <person name="Kater M.M."/>
            <person name="Davies B."/>
            <person name="Angenent G.C."/>
            <person name="Colombo L."/>
        </authorList>
    </citation>
    <scope>GENE FAMILY</scope>
    <scope>NOMENCLATURE</scope>
</reference>
<reference key="6">
    <citation type="journal article" date="2010" name="Plant Physiol.">
        <title>An atlas of type I MADS box gene expression during female gametophyte and seed development in Arabidopsis.</title>
        <authorList>
            <person name="Bemer M."/>
            <person name="Heijmans K."/>
            <person name="Airoldi C."/>
            <person name="Davies B."/>
            <person name="Angenent G.C."/>
        </authorList>
    </citation>
    <scope>DEVELOPMENTAL STAGE</scope>
</reference>
<protein>
    <recommendedName>
        <fullName evidence="7">Agamous-like MADS-box protein AGL29</fullName>
    </recommendedName>
</protein>
<comment type="function">
    <text>Probable transcription factor.</text>
</comment>
<comment type="subcellular location">
    <subcellularLocation>
        <location evidence="2">Nucleus</location>
    </subcellularLocation>
</comment>
<comment type="tissue specificity">
    <text evidence="4">Expressed in pollen.</text>
</comment>
<comment type="developmental stage">
    <text evidence="5">During embryogenesis, expressed in the chalazal endosperm.</text>
</comment>
<comment type="sequence caution" evidence="7">
    <conflict type="erroneous termination">
        <sequence resource="EMBL-CDS" id="ABK28522"/>
    </conflict>
    <text>Extended C-terminus.</text>
</comment>
<accession>O64703</accession>
<accession>A0MER8</accession>
<accession>Q76K79</accession>
<dbReference type="EMBL" id="AC004077">
    <property type="protein sequence ID" value="AAC26702.1"/>
    <property type="molecule type" value="Genomic_DNA"/>
</dbReference>
<dbReference type="EMBL" id="AC004481">
    <property type="protein sequence ID" value="AAM14943.1"/>
    <property type="molecule type" value="Genomic_DNA"/>
</dbReference>
<dbReference type="EMBL" id="CP002685">
    <property type="protein sequence ID" value="AEC08974.1"/>
    <property type="molecule type" value="Genomic_DNA"/>
</dbReference>
<dbReference type="EMBL" id="DQ446598">
    <property type="protein sequence ID" value="ABE65885.1"/>
    <property type="molecule type" value="mRNA"/>
</dbReference>
<dbReference type="EMBL" id="DQ653040">
    <property type="protein sequence ID" value="ABK28522.1"/>
    <property type="status" value="ALT_SEQ"/>
    <property type="molecule type" value="mRNA"/>
</dbReference>
<dbReference type="EMBL" id="AB094117">
    <property type="protein sequence ID" value="BAC99092.1"/>
    <property type="molecule type" value="mRNA"/>
</dbReference>
<dbReference type="PIR" id="T02331">
    <property type="entry name" value="T02331"/>
</dbReference>
<dbReference type="RefSeq" id="NP_180991.1">
    <property type="nucleotide sequence ID" value="NM_128996.3"/>
</dbReference>
<dbReference type="SMR" id="O64703"/>
<dbReference type="FunCoup" id="O64703">
    <property type="interactions" value="60"/>
</dbReference>
<dbReference type="IntAct" id="O64703">
    <property type="interactions" value="5"/>
</dbReference>
<dbReference type="STRING" id="3702.O64703"/>
<dbReference type="PaxDb" id="3702-AT2G34440.1"/>
<dbReference type="EnsemblPlants" id="AT2G34440.1">
    <property type="protein sequence ID" value="AT2G34440.1"/>
    <property type="gene ID" value="AT2G34440"/>
</dbReference>
<dbReference type="GeneID" id="818007"/>
<dbReference type="Gramene" id="AT2G34440.1">
    <property type="protein sequence ID" value="AT2G34440.1"/>
    <property type="gene ID" value="AT2G34440"/>
</dbReference>
<dbReference type="KEGG" id="ath:AT2G34440"/>
<dbReference type="Araport" id="AT2G34440"/>
<dbReference type="TAIR" id="AT2G34440">
    <property type="gene designation" value="AGL29"/>
</dbReference>
<dbReference type="eggNOG" id="KOG0014">
    <property type="taxonomic scope" value="Eukaryota"/>
</dbReference>
<dbReference type="HOGENOM" id="CLU_053053_5_3_1"/>
<dbReference type="InParanoid" id="O64703"/>
<dbReference type="OMA" id="CNAELGI"/>
<dbReference type="OrthoDB" id="1898716at2759"/>
<dbReference type="PhylomeDB" id="O64703"/>
<dbReference type="PRO" id="PR:O64703"/>
<dbReference type="Proteomes" id="UP000006548">
    <property type="component" value="Chromosome 2"/>
</dbReference>
<dbReference type="ExpressionAtlas" id="O64703">
    <property type="expression patterns" value="differential"/>
</dbReference>
<dbReference type="GO" id="GO:0005634">
    <property type="term" value="C:nucleus"/>
    <property type="evidence" value="ECO:0007669"/>
    <property type="project" value="UniProtKB-SubCell"/>
</dbReference>
<dbReference type="GO" id="GO:0003677">
    <property type="term" value="F:DNA binding"/>
    <property type="evidence" value="ECO:0007669"/>
    <property type="project" value="UniProtKB-KW"/>
</dbReference>
<dbReference type="GO" id="GO:0003700">
    <property type="term" value="F:DNA-binding transcription factor activity"/>
    <property type="evidence" value="ECO:0000250"/>
    <property type="project" value="TAIR"/>
</dbReference>
<dbReference type="GO" id="GO:0046983">
    <property type="term" value="F:protein dimerization activity"/>
    <property type="evidence" value="ECO:0007669"/>
    <property type="project" value="InterPro"/>
</dbReference>
<dbReference type="FunFam" id="3.40.1810.10:FF:000006">
    <property type="entry name" value="Agamous-like MADS-box protein AGL62"/>
    <property type="match status" value="1"/>
</dbReference>
<dbReference type="Gene3D" id="3.40.1810.10">
    <property type="entry name" value="Transcription factor, MADS-box"/>
    <property type="match status" value="1"/>
</dbReference>
<dbReference type="InterPro" id="IPR002100">
    <property type="entry name" value="TF_MADSbox"/>
</dbReference>
<dbReference type="InterPro" id="IPR036879">
    <property type="entry name" value="TF_MADSbox_sf"/>
</dbReference>
<dbReference type="PANTHER" id="PTHR11945:SF773">
    <property type="entry name" value="AGAMOUS-LIKE MADS-BOX PROTEIN AGL29"/>
    <property type="match status" value="1"/>
</dbReference>
<dbReference type="PANTHER" id="PTHR11945">
    <property type="entry name" value="MADS BOX PROTEIN"/>
    <property type="match status" value="1"/>
</dbReference>
<dbReference type="Pfam" id="PF00319">
    <property type="entry name" value="SRF-TF"/>
    <property type="match status" value="1"/>
</dbReference>
<dbReference type="PRINTS" id="PR00404">
    <property type="entry name" value="MADSDOMAIN"/>
</dbReference>
<dbReference type="SMART" id="SM00432">
    <property type="entry name" value="MADS"/>
    <property type="match status" value="1"/>
</dbReference>
<dbReference type="SUPFAM" id="SSF55455">
    <property type="entry name" value="SRF-like"/>
    <property type="match status" value="1"/>
</dbReference>
<dbReference type="PROSITE" id="PS50066">
    <property type="entry name" value="MADS_BOX_2"/>
    <property type="match status" value="1"/>
</dbReference>
<proteinExistence type="evidence at transcript level"/>
<organism>
    <name type="scientific">Arabidopsis thaliana</name>
    <name type="common">Mouse-ear cress</name>
    <dbReference type="NCBI Taxonomy" id="3702"/>
    <lineage>
        <taxon>Eukaryota</taxon>
        <taxon>Viridiplantae</taxon>
        <taxon>Streptophyta</taxon>
        <taxon>Embryophyta</taxon>
        <taxon>Tracheophyta</taxon>
        <taxon>Spermatophyta</taxon>
        <taxon>Magnoliopsida</taxon>
        <taxon>eudicotyledons</taxon>
        <taxon>Gunneridae</taxon>
        <taxon>Pentapetalae</taxon>
        <taxon>rosids</taxon>
        <taxon>malvids</taxon>
        <taxon>Brassicales</taxon>
        <taxon>Brassicaceae</taxon>
        <taxon>Camelineae</taxon>
        <taxon>Arabidopsis</taxon>
    </lineage>
</organism>
<name>AGL29_ARATH</name>
<feature type="chain" id="PRO_0000433965" description="Agamous-like MADS-box protein AGL29">
    <location>
        <begin position="1"/>
        <end position="172"/>
    </location>
</feature>
<feature type="domain" description="MADS-box" evidence="2">
    <location>
        <begin position="1"/>
        <end position="61"/>
    </location>
</feature>
<feature type="region of interest" description="Disordered" evidence="3">
    <location>
        <begin position="106"/>
        <end position="125"/>
    </location>
</feature>
<feature type="coiled-coil region" evidence="1">
    <location>
        <begin position="86"/>
        <end position="123"/>
    </location>
</feature>
<feature type="sequence conflict" description="In Ref. 3; ABK28522." evidence="7" ref="3">
    <original>E</original>
    <variation>K</variation>
    <location>
        <position position="42"/>
    </location>
</feature>
<keyword id="KW-0175">Coiled coil</keyword>
<keyword id="KW-0238">DNA-binding</keyword>
<keyword id="KW-0539">Nucleus</keyword>
<keyword id="KW-1185">Reference proteome</keyword>
<keyword id="KW-0804">Transcription</keyword>
<keyword id="KW-0805">Transcription regulation</keyword>
<gene>
    <name evidence="6" type="primary">AGL29</name>
    <name evidence="8" type="ordered locus">At2g34440</name>
</gene>